<reference key="1">
    <citation type="journal article" date="1997" name="Mol. Cell. Biol.">
        <title>CDC45, a novel yeast gene that functions with the origin recognition complex and Mcm proteins in initiation of DNA replication.</title>
        <authorList>
            <person name="Zou L."/>
            <person name="Mitchell J."/>
            <person name="Stillman B."/>
        </authorList>
    </citation>
    <scope>NUCLEOTIDE SEQUENCE [GENOMIC DNA]</scope>
    <scope>FUNCTION</scope>
</reference>
<reference key="2">
    <citation type="journal article" date="1996" name="Proc. Natl. Acad. Sci. U.S.A.">
        <title>Cdc45p assembles into a complex with Cdc46p/Mcm5p, is required for minichromosome maintenance, and is essential for chromosomal DNA replication.</title>
        <authorList>
            <person name="Hopwood B."/>
            <person name="Dalton S."/>
        </authorList>
    </citation>
    <scope>NUCLEOTIDE SEQUENCE [GENOMIC DNA]</scope>
    <scope>FUNCTION</scope>
    <scope>SUBCELLULAR LOCATION</scope>
</reference>
<reference key="3">
    <citation type="submission" date="1996-05" db="EMBL/GenBank/DDBJ databases">
        <authorList>
            <person name="Messenguy F."/>
            <person name="Dubois E."/>
            <person name="Vierendeels F."/>
            <person name="Scherens B."/>
        </authorList>
    </citation>
    <scope>NUCLEOTIDE SEQUENCE [GENOMIC DNA]</scope>
</reference>
<reference key="4">
    <citation type="journal article" date="1997" name="Nature">
        <title>The nucleotide sequence of Saccharomyces cerevisiae chromosome XII.</title>
        <authorList>
            <person name="Johnston M."/>
            <person name="Hillier L.W."/>
            <person name="Riles L."/>
            <person name="Albermann K."/>
            <person name="Andre B."/>
            <person name="Ansorge W."/>
            <person name="Benes V."/>
            <person name="Brueckner M."/>
            <person name="Delius H."/>
            <person name="Dubois E."/>
            <person name="Duesterhoeft A."/>
            <person name="Entian K.-D."/>
            <person name="Floeth M."/>
            <person name="Goffeau A."/>
            <person name="Hebling U."/>
            <person name="Heumann K."/>
            <person name="Heuss-Neitzel D."/>
            <person name="Hilbert H."/>
            <person name="Hilger F."/>
            <person name="Kleine K."/>
            <person name="Koetter P."/>
            <person name="Louis E.J."/>
            <person name="Messenguy F."/>
            <person name="Mewes H.-W."/>
            <person name="Miosga T."/>
            <person name="Moestl D."/>
            <person name="Mueller-Auer S."/>
            <person name="Nentwich U."/>
            <person name="Obermaier B."/>
            <person name="Piravandi E."/>
            <person name="Pohl T.M."/>
            <person name="Portetelle D."/>
            <person name="Purnelle B."/>
            <person name="Rechmann S."/>
            <person name="Rieger M."/>
            <person name="Rinke M."/>
            <person name="Rose M."/>
            <person name="Scharfe M."/>
            <person name="Scherens B."/>
            <person name="Scholler P."/>
            <person name="Schwager C."/>
            <person name="Schwarz S."/>
            <person name="Underwood A.P."/>
            <person name="Urrestarazu L.A."/>
            <person name="Vandenbol M."/>
            <person name="Verhasselt P."/>
            <person name="Vierendeels F."/>
            <person name="Voet M."/>
            <person name="Volckaert G."/>
            <person name="Voss H."/>
            <person name="Wambutt R."/>
            <person name="Wedler E."/>
            <person name="Wedler H."/>
            <person name="Zimmermann F.K."/>
            <person name="Zollner A."/>
            <person name="Hani J."/>
            <person name="Hoheisel J.D."/>
        </authorList>
    </citation>
    <scope>NUCLEOTIDE SEQUENCE [LARGE SCALE GENOMIC DNA]</scope>
    <source>
        <strain>ATCC 204508 / S288c</strain>
    </source>
</reference>
<reference key="5">
    <citation type="journal article" date="2014" name="G3 (Bethesda)">
        <title>The reference genome sequence of Saccharomyces cerevisiae: Then and now.</title>
        <authorList>
            <person name="Engel S.R."/>
            <person name="Dietrich F.S."/>
            <person name="Fisk D.G."/>
            <person name="Binkley G."/>
            <person name="Balakrishnan R."/>
            <person name="Costanzo M.C."/>
            <person name="Dwight S.S."/>
            <person name="Hitz B.C."/>
            <person name="Karra K."/>
            <person name="Nash R.S."/>
            <person name="Weng S."/>
            <person name="Wong E.D."/>
            <person name="Lloyd P."/>
            <person name="Skrzypek M.S."/>
            <person name="Miyasato S.R."/>
            <person name="Simison M."/>
            <person name="Cherry J.M."/>
        </authorList>
    </citation>
    <scope>GENOME REANNOTATION</scope>
    <source>
        <strain>ATCC 204508 / S288c</strain>
    </source>
</reference>
<reference key="6">
    <citation type="journal article" date="2003" name="Nature">
        <title>Global analysis of protein expression in yeast.</title>
        <authorList>
            <person name="Ghaemmaghami S."/>
            <person name="Huh W.-K."/>
            <person name="Bower K."/>
            <person name="Howson R.W."/>
            <person name="Belle A."/>
            <person name="Dephoure N."/>
            <person name="O'Shea E.K."/>
            <person name="Weissman J.S."/>
        </authorList>
    </citation>
    <scope>LEVEL OF PROTEIN EXPRESSION [LARGE SCALE ANALYSIS]</scope>
</reference>
<reference key="7">
    <citation type="journal article" date="2004" name="J. Mol. Biol.">
        <title>Mcm10 and Cdc45 cooperate in origin activation in Saccharomyces cerevisiae.</title>
        <authorList>
            <person name="Sawyer S.L."/>
            <person name="Cheng I.H."/>
            <person name="Chai W."/>
            <person name="Tye B.K."/>
        </authorList>
    </citation>
    <scope>INTERACTION WITH MCM10</scope>
</reference>
<reference key="8">
    <citation type="journal article" date="2008" name="Mol. Cell. Proteomics">
        <title>A multidimensional chromatography technology for in-depth phosphoproteome analysis.</title>
        <authorList>
            <person name="Albuquerque C.P."/>
            <person name="Smolka M.B."/>
            <person name="Payne S.H."/>
            <person name="Bafna V."/>
            <person name="Eng J."/>
            <person name="Zhou H."/>
        </authorList>
    </citation>
    <scope>PHOSPHORYLATION [LARGE SCALE ANALYSIS] AT THR-453</scope>
    <scope>IDENTIFICATION BY MASS SPECTROMETRY [LARGE SCALE ANALYSIS]</scope>
</reference>
<accession>Q08032</accession>
<accession>D6VYA3</accession>
<accession>Q05908</accession>
<feature type="chain" id="PRO_0000192819" description="Cell division control protein 45">
    <location>
        <begin position="1"/>
        <end position="650"/>
    </location>
</feature>
<feature type="region of interest" description="Disordered" evidence="1">
    <location>
        <begin position="168"/>
        <end position="227"/>
    </location>
</feature>
<feature type="region of interest" description="Disordered" evidence="1">
    <location>
        <begin position="442"/>
        <end position="462"/>
    </location>
</feature>
<feature type="compositionally biased region" description="Acidic residues" evidence="1">
    <location>
        <begin position="168"/>
        <end position="205"/>
    </location>
</feature>
<feature type="compositionally biased region" description="Acidic residues" evidence="1">
    <location>
        <begin position="449"/>
        <end position="461"/>
    </location>
</feature>
<feature type="modified residue" description="Phosphothreonine" evidence="7">
    <location>
        <position position="453"/>
    </location>
</feature>
<feature type="sequence conflict" description="In Ref. 4; AAB67546." evidence="6" ref="4">
    <original>T</original>
    <variation>K</variation>
    <location>
        <position position="576"/>
    </location>
</feature>
<feature type="helix" evidence="8">
    <location>
        <begin position="5"/>
        <end position="7"/>
    </location>
</feature>
<feature type="helix" evidence="8">
    <location>
        <begin position="8"/>
        <end position="19"/>
    </location>
</feature>
<feature type="strand" evidence="8">
    <location>
        <begin position="21"/>
        <end position="24"/>
    </location>
</feature>
<feature type="strand" evidence="8">
    <location>
        <begin position="27"/>
        <end position="32"/>
    </location>
</feature>
<feature type="helix" evidence="8">
    <location>
        <begin position="36"/>
        <end position="51"/>
    </location>
</feature>
<feature type="strand" evidence="8">
    <location>
        <begin position="58"/>
        <end position="61"/>
    </location>
</feature>
<feature type="helix" evidence="8">
    <location>
        <begin position="64"/>
        <end position="72"/>
    </location>
</feature>
<feature type="strand" evidence="8">
    <location>
        <begin position="80"/>
        <end position="87"/>
    </location>
</feature>
<feature type="helix" evidence="8">
    <location>
        <begin position="92"/>
        <end position="95"/>
    </location>
</feature>
<feature type="turn" evidence="8">
    <location>
        <begin position="100"/>
        <end position="103"/>
    </location>
</feature>
<feature type="strand" evidence="8">
    <location>
        <begin position="119"/>
        <end position="123"/>
    </location>
</feature>
<feature type="strand" evidence="8">
    <location>
        <begin position="126"/>
        <end position="128"/>
    </location>
</feature>
<feature type="helix" evidence="8">
    <location>
        <begin position="131"/>
        <end position="135"/>
    </location>
</feature>
<feature type="strand" evidence="8">
    <location>
        <begin position="138"/>
        <end position="143"/>
    </location>
</feature>
<feature type="helix" evidence="8">
    <location>
        <begin position="147"/>
        <end position="151"/>
    </location>
</feature>
<feature type="helix" evidence="8">
    <location>
        <begin position="153"/>
        <end position="159"/>
    </location>
</feature>
<feature type="helix" evidence="8">
    <location>
        <begin position="233"/>
        <end position="241"/>
    </location>
</feature>
<feature type="helix" evidence="8">
    <location>
        <begin position="251"/>
        <end position="261"/>
    </location>
</feature>
<feature type="helix" evidence="8">
    <location>
        <begin position="267"/>
        <end position="278"/>
    </location>
</feature>
<feature type="turn" evidence="8">
    <location>
        <begin position="279"/>
        <end position="283"/>
    </location>
</feature>
<feature type="helix" evidence="8">
    <location>
        <begin position="285"/>
        <end position="301"/>
    </location>
</feature>
<feature type="strand" evidence="8">
    <location>
        <begin position="316"/>
        <end position="322"/>
    </location>
</feature>
<feature type="strand" evidence="8">
    <location>
        <begin position="325"/>
        <end position="328"/>
    </location>
</feature>
<feature type="helix" evidence="8">
    <location>
        <begin position="329"/>
        <end position="331"/>
    </location>
</feature>
<feature type="helix" evidence="8">
    <location>
        <begin position="334"/>
        <end position="339"/>
    </location>
</feature>
<feature type="helix" evidence="8">
    <location>
        <begin position="342"/>
        <end position="348"/>
    </location>
</feature>
<feature type="helix" evidence="8">
    <location>
        <begin position="354"/>
        <end position="365"/>
    </location>
</feature>
<feature type="helix" evidence="8">
    <location>
        <begin position="370"/>
        <end position="373"/>
    </location>
</feature>
<feature type="turn" evidence="8">
    <location>
        <begin position="377"/>
        <end position="379"/>
    </location>
</feature>
<feature type="helix" evidence="8">
    <location>
        <begin position="382"/>
        <end position="395"/>
    </location>
</feature>
<feature type="helix" evidence="8">
    <location>
        <begin position="397"/>
        <end position="399"/>
    </location>
</feature>
<feature type="helix" evidence="8">
    <location>
        <begin position="402"/>
        <end position="404"/>
    </location>
</feature>
<feature type="strand" evidence="8">
    <location>
        <begin position="407"/>
        <end position="413"/>
    </location>
</feature>
<feature type="helix" evidence="8">
    <location>
        <begin position="421"/>
        <end position="434"/>
    </location>
</feature>
<feature type="helix" evidence="8">
    <location>
        <begin position="465"/>
        <end position="482"/>
    </location>
</feature>
<feature type="helix" evidence="8">
    <location>
        <begin position="489"/>
        <end position="515"/>
    </location>
</feature>
<feature type="strand" evidence="8">
    <location>
        <begin position="526"/>
        <end position="530"/>
    </location>
</feature>
<feature type="strand" evidence="8">
    <location>
        <begin position="534"/>
        <end position="536"/>
    </location>
</feature>
<feature type="helix" evidence="8">
    <location>
        <begin position="542"/>
        <end position="555"/>
    </location>
</feature>
<feature type="turn" evidence="8">
    <location>
        <begin position="559"/>
        <end position="564"/>
    </location>
</feature>
<feature type="strand" evidence="8">
    <location>
        <begin position="567"/>
        <end position="573"/>
    </location>
</feature>
<feature type="turn" evidence="8">
    <location>
        <begin position="574"/>
        <end position="577"/>
    </location>
</feature>
<feature type="strand" evidence="8">
    <location>
        <begin position="578"/>
        <end position="584"/>
    </location>
</feature>
<feature type="helix" evidence="8">
    <location>
        <begin position="605"/>
        <end position="613"/>
    </location>
</feature>
<feature type="strand" evidence="8">
    <location>
        <begin position="619"/>
        <end position="621"/>
    </location>
</feature>
<feature type="strand" evidence="8">
    <location>
        <begin position="630"/>
        <end position="633"/>
    </location>
</feature>
<feature type="helix" evidence="8">
    <location>
        <begin position="634"/>
        <end position="636"/>
    </location>
</feature>
<feature type="helix" evidence="8">
    <location>
        <begin position="637"/>
        <end position="644"/>
    </location>
</feature>
<feature type="turn" evidence="8">
    <location>
        <begin position="645"/>
        <end position="648"/>
    </location>
</feature>
<sequence>MYYGISQFSEAYNKILRNSSSHSSCQLVIFVSCLNIDALCATKMLSLLFKKQLVQSQIVPIFGYSELRRHYSQLDDNINSLLLVGFGGVIDLEAFLEIDPQEYVIDTDEKSGEQSFRRDIYVLDAHRPWNLDNIFGSQIIQCFDDGTVDDTLGEQKEAYYKLLELDEESGDDELSGDENDNNGGDDEATDADEVTDEDEEDEDETISNKRGNSSIGPNDLSKRKQRKKQIHEYEGVLEEYYSQGTTVVNSISAQIYSLLSAIGETNLSNLWLNILGTTSLDIAYAQVYNRLYPLLQDEVKRLTPSSRNSVKTPDTLTLNIQPDYYLFLLRHSSLYDSFYYSNYVNAKLSLWNENGKKRLHKMFARMGIPLSTAQETWLYMDHSIKRELGIIFDKNLDRYGLQDIIRDGFVRTLGYRGSISASEFVEALTALLEVGNSTDKDSVKINNDNNDDTDGEEEEDNSAQKLTNLRKRWVSNFWLSWDALDDRKVELLNRGIQLAQDLQRAIFNTGVAILEKKLIKHLRIYRLCVLQDGPDLDLYRNPLTLLRLGNWLIECCAESEDKQLLPMVLASIDENTDTYLVAGLTPRYPRGLDTIHTKKPILNNFSMAFQQITAETDAKVRIDNFESSIIEIRREDLSPFLEKLTLSGLL</sequence>
<protein>
    <recommendedName>
        <fullName>Cell division control protein 45</fullName>
    </recommendedName>
</protein>
<proteinExistence type="evidence at protein level"/>
<organism>
    <name type="scientific">Saccharomyces cerevisiae (strain ATCC 204508 / S288c)</name>
    <name type="common">Baker's yeast</name>
    <dbReference type="NCBI Taxonomy" id="559292"/>
    <lineage>
        <taxon>Eukaryota</taxon>
        <taxon>Fungi</taxon>
        <taxon>Dikarya</taxon>
        <taxon>Ascomycota</taxon>
        <taxon>Saccharomycotina</taxon>
        <taxon>Saccharomycetes</taxon>
        <taxon>Saccharomycetales</taxon>
        <taxon>Saccharomycetaceae</taxon>
        <taxon>Saccharomyces</taxon>
    </lineage>
</organism>
<dbReference type="EMBL" id="U65790">
    <property type="protein sequence ID" value="AAC49620.1"/>
    <property type="molecule type" value="Genomic_DNA"/>
</dbReference>
<dbReference type="EMBL" id="U56821">
    <property type="protein sequence ID" value="AAB09053.1"/>
    <property type="molecule type" value="Genomic_DNA"/>
</dbReference>
<dbReference type="EMBL" id="Z73275">
    <property type="protein sequence ID" value="CAA97668.1"/>
    <property type="molecule type" value="Genomic_DNA"/>
</dbReference>
<dbReference type="EMBL" id="U53876">
    <property type="protein sequence ID" value="AAB67546.1"/>
    <property type="molecule type" value="Genomic_DNA"/>
</dbReference>
<dbReference type="EMBL" id="BK006945">
    <property type="protein sequence ID" value="DAA09419.1"/>
    <property type="molecule type" value="Genomic_DNA"/>
</dbReference>
<dbReference type="PIR" id="S64939">
    <property type="entry name" value="S64939"/>
</dbReference>
<dbReference type="RefSeq" id="NP_013204.1">
    <property type="nucleotide sequence ID" value="NM_001181990.1"/>
</dbReference>
<dbReference type="PDB" id="3JC5">
    <property type="method" value="EM"/>
    <property type="resolution" value="4.70 A"/>
    <property type="chains" value="c=1-650"/>
</dbReference>
<dbReference type="PDB" id="3JC6">
    <property type="method" value="EM"/>
    <property type="resolution" value="3.70 A"/>
    <property type="chains" value="E=1-650"/>
</dbReference>
<dbReference type="PDB" id="3JC7">
    <property type="method" value="EM"/>
    <property type="resolution" value="4.80 A"/>
    <property type="chains" value="c=1-650"/>
</dbReference>
<dbReference type="PDB" id="5U8S">
    <property type="method" value="EM"/>
    <property type="resolution" value="6.10 A"/>
    <property type="chains" value="E=1-650"/>
</dbReference>
<dbReference type="PDB" id="5U8T">
    <property type="method" value="EM"/>
    <property type="resolution" value="4.90 A"/>
    <property type="chains" value="E=1-650"/>
</dbReference>
<dbReference type="PDB" id="6HV9">
    <property type="method" value="EM"/>
    <property type="resolution" value="4.98 A"/>
    <property type="chains" value="G=1-650"/>
</dbReference>
<dbReference type="PDB" id="6PTJ">
    <property type="method" value="EM"/>
    <property type="resolution" value="3.80 A"/>
    <property type="chains" value="c=1-650"/>
</dbReference>
<dbReference type="PDB" id="6PTN">
    <property type="method" value="EM"/>
    <property type="resolution" value="5.80 A"/>
    <property type="chains" value="H/h=1-650"/>
</dbReference>
<dbReference type="PDB" id="6PTO">
    <property type="method" value="EM"/>
    <property type="resolution" value="7.00 A"/>
    <property type="chains" value="E/e/r=1-650"/>
</dbReference>
<dbReference type="PDB" id="6SKL">
    <property type="method" value="EM"/>
    <property type="resolution" value="3.70 A"/>
    <property type="chains" value="E=1-650"/>
</dbReference>
<dbReference type="PDB" id="6U0M">
    <property type="method" value="EM"/>
    <property type="resolution" value="3.90 A"/>
    <property type="chains" value="E=5-650"/>
</dbReference>
<dbReference type="PDB" id="7QHS">
    <property type="method" value="EM"/>
    <property type="resolution" value="3.30 A"/>
    <property type="chains" value="E=1-650"/>
</dbReference>
<dbReference type="PDB" id="8J09">
    <property type="method" value="X-ray"/>
    <property type="resolution" value="2.61 A"/>
    <property type="chains" value="B=1-650"/>
</dbReference>
<dbReference type="PDB" id="8KG6">
    <property type="method" value="EM"/>
    <property type="resolution" value="3.07 A"/>
    <property type="chains" value="E=1-650"/>
</dbReference>
<dbReference type="PDB" id="8KG8">
    <property type="method" value="EM"/>
    <property type="resolution" value="4.23 A"/>
    <property type="chains" value="E=1-650"/>
</dbReference>
<dbReference type="PDB" id="8KG9">
    <property type="method" value="EM"/>
    <property type="resolution" value="4.52 A"/>
    <property type="chains" value="E=1-650"/>
</dbReference>
<dbReference type="PDB" id="8P5E">
    <property type="method" value="EM"/>
    <property type="resolution" value="3.90 A"/>
    <property type="chains" value="E=1-650"/>
</dbReference>
<dbReference type="PDB" id="8P62">
    <property type="method" value="EM"/>
    <property type="resolution" value="3.90 A"/>
    <property type="chains" value="E=1-650"/>
</dbReference>
<dbReference type="PDB" id="8P63">
    <property type="method" value="EM"/>
    <property type="resolution" value="3.70 A"/>
    <property type="chains" value="E=1-650"/>
</dbReference>
<dbReference type="PDB" id="8W7M">
    <property type="method" value="EM"/>
    <property type="resolution" value="4.12 A"/>
    <property type="chains" value="E=1-650"/>
</dbReference>
<dbReference type="PDB" id="8W7S">
    <property type="method" value="EM"/>
    <property type="resolution" value="7.39 A"/>
    <property type="chains" value="E=1-650"/>
</dbReference>
<dbReference type="PDB" id="8XGC">
    <property type="method" value="EM"/>
    <property type="resolution" value="3.70 A"/>
    <property type="chains" value="E=1-650"/>
</dbReference>
<dbReference type="PDBsum" id="3JC5"/>
<dbReference type="PDBsum" id="3JC6"/>
<dbReference type="PDBsum" id="3JC7"/>
<dbReference type="PDBsum" id="5U8S"/>
<dbReference type="PDBsum" id="5U8T"/>
<dbReference type="PDBsum" id="6HV9"/>
<dbReference type="PDBsum" id="6PTJ"/>
<dbReference type="PDBsum" id="6PTN"/>
<dbReference type="PDBsum" id="6PTO"/>
<dbReference type="PDBsum" id="6SKL"/>
<dbReference type="PDBsum" id="6U0M"/>
<dbReference type="PDBsum" id="7QHS"/>
<dbReference type="PDBsum" id="8J09"/>
<dbReference type="PDBsum" id="8KG6"/>
<dbReference type="PDBsum" id="8KG8"/>
<dbReference type="PDBsum" id="8KG9"/>
<dbReference type="PDBsum" id="8P5E"/>
<dbReference type="PDBsum" id="8P62"/>
<dbReference type="PDBsum" id="8P63"/>
<dbReference type="PDBsum" id="8W7M"/>
<dbReference type="PDBsum" id="8W7S"/>
<dbReference type="PDBsum" id="8XGC"/>
<dbReference type="EMDB" id="EMD-0288"/>
<dbReference type="EMDB" id="EMD-10227"/>
<dbReference type="EMDB" id="EMD-13537"/>
<dbReference type="EMDB" id="EMD-13539"/>
<dbReference type="EMDB" id="EMD-13978"/>
<dbReference type="EMDB" id="EMD-14439"/>
<dbReference type="EMDB" id="EMD-15924"/>
<dbReference type="EMDB" id="EMD-17449"/>
<dbReference type="EMDB" id="EMD-17458"/>
<dbReference type="EMDB" id="EMD-17459"/>
<dbReference type="EMDB" id="EMD-20471"/>
<dbReference type="EMDB" id="EMD-20472"/>
<dbReference type="EMDB" id="EMD-20473"/>
<dbReference type="EMDB" id="EMD-20607"/>
<dbReference type="EMDB" id="EMD-37211"/>
<dbReference type="EMDB" id="EMD-37213"/>
<dbReference type="EMDB" id="EMD-37215"/>
<dbReference type="EMDB" id="EMD-37343"/>
<dbReference type="EMDB" id="EMD-37345"/>
<dbReference type="EMDB" id="EMD-38317"/>
<dbReference type="EMDB" id="EMD-8518"/>
<dbReference type="EMDB" id="EMD-8519"/>
<dbReference type="SMR" id="Q08032"/>
<dbReference type="BioGRID" id="31376">
    <property type="interactions" value="282"/>
</dbReference>
<dbReference type="ComplexPortal" id="CPX-297">
    <property type="entry name" value="CMG helicase complex"/>
</dbReference>
<dbReference type="DIP" id="DIP-2405N"/>
<dbReference type="FunCoup" id="Q08032">
    <property type="interactions" value="863"/>
</dbReference>
<dbReference type="IntAct" id="Q08032">
    <property type="interactions" value="39"/>
</dbReference>
<dbReference type="MINT" id="Q08032"/>
<dbReference type="STRING" id="4932.YLR103C"/>
<dbReference type="iPTMnet" id="Q08032"/>
<dbReference type="PaxDb" id="4932-YLR103C"/>
<dbReference type="PeptideAtlas" id="Q08032"/>
<dbReference type="TopDownProteomics" id="Q08032"/>
<dbReference type="EnsemblFungi" id="YLR103C_mRNA">
    <property type="protein sequence ID" value="YLR103C"/>
    <property type="gene ID" value="YLR103C"/>
</dbReference>
<dbReference type="GeneID" id="850793"/>
<dbReference type="KEGG" id="sce:YLR103C"/>
<dbReference type="AGR" id="SGD:S000004093"/>
<dbReference type="SGD" id="S000004093">
    <property type="gene designation" value="CDC45"/>
</dbReference>
<dbReference type="VEuPathDB" id="FungiDB:YLR103C"/>
<dbReference type="eggNOG" id="KOG2475">
    <property type="taxonomic scope" value="Eukaryota"/>
</dbReference>
<dbReference type="GeneTree" id="ENSGT00390000009662"/>
<dbReference type="HOGENOM" id="CLU_005871_3_0_1"/>
<dbReference type="InParanoid" id="Q08032"/>
<dbReference type="OMA" id="EDCFMEA"/>
<dbReference type="OrthoDB" id="10258882at2759"/>
<dbReference type="BioCyc" id="YEAST:G3O-32251-MONOMER"/>
<dbReference type="Reactome" id="R-SCE-176187">
    <property type="pathway name" value="Activation of ATR in response to replication stress"/>
</dbReference>
<dbReference type="Reactome" id="R-SCE-68962">
    <property type="pathway name" value="Activation of the pre-replicative complex"/>
</dbReference>
<dbReference type="BioGRID-ORCS" id="850793">
    <property type="hits" value="0 hits in 10 CRISPR screens"/>
</dbReference>
<dbReference type="PRO" id="PR:Q08032"/>
<dbReference type="Proteomes" id="UP000002311">
    <property type="component" value="Chromosome XII"/>
</dbReference>
<dbReference type="RNAct" id="Q08032">
    <property type="molecule type" value="protein"/>
</dbReference>
<dbReference type="GO" id="GO:0071162">
    <property type="term" value="C:CMG complex"/>
    <property type="evidence" value="ECO:0000314"/>
    <property type="project" value="SGD"/>
</dbReference>
<dbReference type="GO" id="GO:0031261">
    <property type="term" value="C:DNA replication preinitiation complex"/>
    <property type="evidence" value="ECO:0000314"/>
    <property type="project" value="SGD"/>
</dbReference>
<dbReference type="GO" id="GO:0043596">
    <property type="term" value="C:nuclear replication fork"/>
    <property type="evidence" value="ECO:0000314"/>
    <property type="project" value="SGD"/>
</dbReference>
<dbReference type="GO" id="GO:0005634">
    <property type="term" value="C:nucleus"/>
    <property type="evidence" value="ECO:0000314"/>
    <property type="project" value="SGD"/>
</dbReference>
<dbReference type="GO" id="GO:0003682">
    <property type="term" value="F:chromatin binding"/>
    <property type="evidence" value="ECO:0000314"/>
    <property type="project" value="SGD"/>
</dbReference>
<dbReference type="GO" id="GO:0003688">
    <property type="term" value="F:DNA replication origin binding"/>
    <property type="evidence" value="ECO:0000314"/>
    <property type="project" value="SGD"/>
</dbReference>
<dbReference type="GO" id="GO:0003697">
    <property type="term" value="F:single-stranded DNA binding"/>
    <property type="evidence" value="ECO:0000314"/>
    <property type="project" value="SGD"/>
</dbReference>
<dbReference type="GO" id="GO:0006270">
    <property type="term" value="P:DNA replication initiation"/>
    <property type="evidence" value="ECO:0000315"/>
    <property type="project" value="SGD"/>
</dbReference>
<dbReference type="GO" id="GO:0000727">
    <property type="term" value="P:double-strand break repair via break-induced replication"/>
    <property type="evidence" value="ECO:0000315"/>
    <property type="project" value="SGD"/>
</dbReference>
<dbReference type="GO" id="GO:1902977">
    <property type="term" value="P:mitotic DNA replication preinitiation complex assembly"/>
    <property type="evidence" value="ECO:0000318"/>
    <property type="project" value="GO_Central"/>
</dbReference>
<dbReference type="InterPro" id="IPR003874">
    <property type="entry name" value="CDC45"/>
</dbReference>
<dbReference type="PANTHER" id="PTHR10507">
    <property type="entry name" value="CDC45-RELATED PROTEIN"/>
    <property type="match status" value="1"/>
</dbReference>
<dbReference type="PANTHER" id="PTHR10507:SF0">
    <property type="entry name" value="CELL DIVISION CONTROL PROTEIN 45 HOMOLOG"/>
    <property type="match status" value="1"/>
</dbReference>
<dbReference type="Pfam" id="PF02724">
    <property type="entry name" value="CDC45"/>
    <property type="match status" value="1"/>
</dbReference>
<name>CDC45_YEAST</name>
<keyword id="KW-0002">3D-structure</keyword>
<keyword id="KW-0131">Cell cycle</keyword>
<keyword id="KW-0235">DNA replication</keyword>
<keyword id="KW-0539">Nucleus</keyword>
<keyword id="KW-0597">Phosphoprotein</keyword>
<keyword id="KW-1185">Reference proteome</keyword>
<evidence type="ECO:0000256" key="1">
    <source>
        <dbReference type="SAM" id="MobiDB-lite"/>
    </source>
</evidence>
<evidence type="ECO:0000269" key="2">
    <source>
    </source>
</evidence>
<evidence type="ECO:0000269" key="3">
    <source>
    </source>
</evidence>
<evidence type="ECO:0000269" key="4">
    <source>
    </source>
</evidence>
<evidence type="ECO:0000269" key="5">
    <source>
    </source>
</evidence>
<evidence type="ECO:0000305" key="6"/>
<evidence type="ECO:0007744" key="7">
    <source>
    </source>
</evidence>
<evidence type="ECO:0007829" key="8">
    <source>
        <dbReference type="PDB" id="8J09"/>
    </source>
</evidence>
<comment type="function">
    <text evidence="4 5">Required for initiation of chromosomal DNA replication. Acts at the origin of replication. Also has a role in minichromosome maintenance.</text>
</comment>
<comment type="subunit">
    <text evidence="3">Assembles into a complex with MCM5/CDC46. Interacts with MCM10.</text>
</comment>
<comment type="interaction">
    <interactant intactId="EBI-4292">
        <id>Q08032</id>
    </interactant>
    <interactant intactId="EBI-5965">
        <id>P32354</id>
        <label>MCM10</label>
    </interactant>
    <organismsDiffer>false</organismsDiffer>
    <experiments>2</experiments>
</comment>
<comment type="interaction">
    <interactant intactId="EBI-4292">
        <id>Q08032</id>
    </interactant>
    <interactant intactId="EBI-412442">
        <id>P25588</id>
        <label>MRC1</label>
    </interactant>
    <organismsDiffer>false</organismsDiffer>
    <experiments>4</experiments>
</comment>
<comment type="interaction">
    <interactant intactId="EBI-4292">
        <id>Q08032</id>
    </interactant>
    <interactant intactId="EBI-23925">
        <id>P53135</id>
        <label>SLD3</label>
    </interactant>
    <organismsDiffer>false</organismsDiffer>
    <experiments>13</experiments>
</comment>
<comment type="interaction">
    <interactant intactId="EBI-4292">
        <id>Q08032</id>
    </interactant>
    <interactant intactId="EBI-28257">
        <id>P53840</id>
        <label>TOF1</label>
    </interactant>
    <organismsDiffer>false</organismsDiffer>
    <experiments>3</experiments>
</comment>
<comment type="subcellular location">
    <subcellularLocation>
        <location evidence="4">Nucleus</location>
    </subcellularLocation>
</comment>
<comment type="miscellaneous">
    <text evidence="2">Present with 1730 molecules/cell in log phase SD medium.</text>
</comment>
<comment type="similarity">
    <text evidence="6">Belongs to the CDC45 family.</text>
</comment>
<gene>
    <name type="primary">CDC45</name>
    <name type="synonym">SLD4</name>
    <name type="ordered locus">YLR103C</name>
    <name type="ORF">L8004.11</name>
</gene>